<gene>
    <name evidence="1" type="primary">rapZ</name>
    <name type="ordered locus">PC1_0271</name>
</gene>
<reference key="1">
    <citation type="submission" date="2009-07" db="EMBL/GenBank/DDBJ databases">
        <title>Complete sequence of Pectobacterium carotovorum subsp. carotovorum PC1.</title>
        <authorList>
            <consortium name="US DOE Joint Genome Institute"/>
            <person name="Lucas S."/>
            <person name="Copeland A."/>
            <person name="Lapidus A."/>
            <person name="Glavina del Rio T."/>
            <person name="Tice H."/>
            <person name="Bruce D."/>
            <person name="Goodwin L."/>
            <person name="Pitluck S."/>
            <person name="Munk A.C."/>
            <person name="Brettin T."/>
            <person name="Detter J.C."/>
            <person name="Han C."/>
            <person name="Tapia R."/>
            <person name="Larimer F."/>
            <person name="Land M."/>
            <person name="Hauser L."/>
            <person name="Kyrpides N."/>
            <person name="Mikhailova N."/>
            <person name="Balakrishnan V."/>
            <person name="Glasner J."/>
            <person name="Perna N.T."/>
        </authorList>
    </citation>
    <scope>NUCLEOTIDE SEQUENCE [LARGE SCALE GENOMIC DNA]</scope>
    <source>
        <strain>PC1</strain>
    </source>
</reference>
<comment type="function">
    <text evidence="1">Modulates the synthesis of GlmS, by affecting the processing and stability of the regulatory small RNA GlmZ. When glucosamine-6-phosphate (GlcN6P) concentrations are high in the cell, RapZ binds GlmZ and targets it to cleavage by RNase E. Consequently, GlmZ is inactivated and unable to activate GlmS synthesis. Under low GlcN6P concentrations, RapZ is sequestered and inactivated by an other regulatory small RNA, GlmY, preventing GlmZ degradation and leading to synthesis of GlmS.</text>
</comment>
<comment type="subunit">
    <text evidence="1">Homotrimer.</text>
</comment>
<comment type="similarity">
    <text evidence="1">Belongs to the RapZ-like family. RapZ subfamily.</text>
</comment>
<keyword id="KW-0067">ATP-binding</keyword>
<keyword id="KW-0342">GTP-binding</keyword>
<keyword id="KW-0547">Nucleotide-binding</keyword>
<keyword id="KW-0694">RNA-binding</keyword>
<accession>C6DIN0</accession>
<dbReference type="EMBL" id="CP001657">
    <property type="protein sequence ID" value="ACT11330.1"/>
    <property type="molecule type" value="Genomic_DNA"/>
</dbReference>
<dbReference type="RefSeq" id="WP_010296630.1">
    <property type="nucleotide sequence ID" value="NC_012917.1"/>
</dbReference>
<dbReference type="SMR" id="C6DIN0"/>
<dbReference type="STRING" id="561230.PC1_0271"/>
<dbReference type="GeneID" id="93388360"/>
<dbReference type="KEGG" id="pct:PC1_0271"/>
<dbReference type="eggNOG" id="COG1660">
    <property type="taxonomic scope" value="Bacteria"/>
</dbReference>
<dbReference type="HOGENOM" id="CLU_059558_1_1_6"/>
<dbReference type="OrthoDB" id="9784461at2"/>
<dbReference type="Proteomes" id="UP000002736">
    <property type="component" value="Chromosome"/>
</dbReference>
<dbReference type="GO" id="GO:0005524">
    <property type="term" value="F:ATP binding"/>
    <property type="evidence" value="ECO:0007669"/>
    <property type="project" value="UniProtKB-UniRule"/>
</dbReference>
<dbReference type="GO" id="GO:0005525">
    <property type="term" value="F:GTP binding"/>
    <property type="evidence" value="ECO:0007669"/>
    <property type="project" value="UniProtKB-UniRule"/>
</dbReference>
<dbReference type="GO" id="GO:0003723">
    <property type="term" value="F:RNA binding"/>
    <property type="evidence" value="ECO:0007669"/>
    <property type="project" value="UniProtKB-KW"/>
</dbReference>
<dbReference type="Gene3D" id="3.40.50.300">
    <property type="entry name" value="P-loop containing nucleotide triphosphate hydrolases"/>
    <property type="match status" value="1"/>
</dbReference>
<dbReference type="HAMAP" id="MF_00636">
    <property type="entry name" value="RapZ_like"/>
    <property type="match status" value="1"/>
</dbReference>
<dbReference type="InterPro" id="IPR027417">
    <property type="entry name" value="P-loop_NTPase"/>
</dbReference>
<dbReference type="InterPro" id="IPR005337">
    <property type="entry name" value="RapZ-like"/>
</dbReference>
<dbReference type="InterPro" id="IPR053930">
    <property type="entry name" value="RapZ-like_N"/>
</dbReference>
<dbReference type="InterPro" id="IPR053931">
    <property type="entry name" value="RapZ_C"/>
</dbReference>
<dbReference type="NCBIfam" id="NF003828">
    <property type="entry name" value="PRK05416.1"/>
    <property type="match status" value="1"/>
</dbReference>
<dbReference type="PANTHER" id="PTHR30448">
    <property type="entry name" value="RNASE ADAPTER PROTEIN RAPZ"/>
    <property type="match status" value="1"/>
</dbReference>
<dbReference type="PANTHER" id="PTHR30448:SF0">
    <property type="entry name" value="RNASE ADAPTER PROTEIN RAPZ"/>
    <property type="match status" value="1"/>
</dbReference>
<dbReference type="Pfam" id="PF22740">
    <property type="entry name" value="PapZ_C"/>
    <property type="match status" value="1"/>
</dbReference>
<dbReference type="Pfam" id="PF03668">
    <property type="entry name" value="RapZ-like_N"/>
    <property type="match status" value="1"/>
</dbReference>
<dbReference type="PIRSF" id="PIRSF005052">
    <property type="entry name" value="P-loopkin"/>
    <property type="match status" value="1"/>
</dbReference>
<dbReference type="SUPFAM" id="SSF52540">
    <property type="entry name" value="P-loop containing nucleoside triphosphate hydrolases"/>
    <property type="match status" value="1"/>
</dbReference>
<name>RAPZ_PECCP</name>
<evidence type="ECO:0000255" key="1">
    <source>
        <dbReference type="HAMAP-Rule" id="MF_00636"/>
    </source>
</evidence>
<protein>
    <recommendedName>
        <fullName evidence="1">RNase adapter protein RapZ</fullName>
    </recommendedName>
</protein>
<sequence length="285" mass="32572">MVLMIVSGRSGSGKSVALRALEDMGFYCVDNLPVVLLPELANTLAARNISAAVSIDVRNMPESPEIFEHAMEQLPPSFSPQLLFLDADRNTLIRRYSDTRRLHPLSSKNLSLESAIDEESDLLEPLRSRADLIIDTSEMSVHELAEMLRTRLLGKRERELTMVFESFGFKHGIPIDADYVFDVRFLPNPHWDPKLRPMTGLDKPVASFLDRHTEVHNFIYQTRSYLELWLPMLETNNRSYLTVAIGCTGGKHRSVYVAEQLADYFRSRGKNVQSRHRTLEKRKPS</sequence>
<organism>
    <name type="scientific">Pectobacterium carotovorum subsp. carotovorum (strain PC1)</name>
    <dbReference type="NCBI Taxonomy" id="561230"/>
    <lineage>
        <taxon>Bacteria</taxon>
        <taxon>Pseudomonadati</taxon>
        <taxon>Pseudomonadota</taxon>
        <taxon>Gammaproteobacteria</taxon>
        <taxon>Enterobacterales</taxon>
        <taxon>Pectobacteriaceae</taxon>
        <taxon>Pectobacterium</taxon>
    </lineage>
</organism>
<feature type="chain" id="PRO_1000212364" description="RNase adapter protein RapZ">
    <location>
        <begin position="1"/>
        <end position="285"/>
    </location>
</feature>
<feature type="region of interest" description="RNA-binding" evidence="1">
    <location>
        <begin position="266"/>
        <end position="285"/>
    </location>
</feature>
<feature type="binding site" evidence="1">
    <location>
        <begin position="8"/>
        <end position="15"/>
    </location>
    <ligand>
        <name>ATP</name>
        <dbReference type="ChEBI" id="CHEBI:30616"/>
    </ligand>
</feature>
<feature type="binding site" evidence="1">
    <location>
        <begin position="56"/>
        <end position="59"/>
    </location>
    <ligand>
        <name>GTP</name>
        <dbReference type="ChEBI" id="CHEBI:37565"/>
    </ligand>
</feature>
<proteinExistence type="inferred from homology"/>